<accession>B0RRR0</accession>
<protein>
    <recommendedName>
        <fullName evidence="1">S-adenosylmethionine:tRNA ribosyltransferase-isomerase</fullName>
        <ecNumber evidence="1">2.4.99.17</ecNumber>
    </recommendedName>
    <alternativeName>
        <fullName evidence="1">Queuosine biosynthesis protein QueA</fullName>
    </alternativeName>
</protein>
<reference key="1">
    <citation type="journal article" date="2008" name="J. Biotechnol.">
        <title>The genome of Xanthomonas campestris pv. campestris B100 and its use for the reconstruction of metabolic pathways involved in xanthan biosynthesis.</title>
        <authorList>
            <person name="Vorhoelter F.-J."/>
            <person name="Schneiker S."/>
            <person name="Goesmann A."/>
            <person name="Krause L."/>
            <person name="Bekel T."/>
            <person name="Kaiser O."/>
            <person name="Linke B."/>
            <person name="Patschkowski T."/>
            <person name="Rueckert C."/>
            <person name="Schmid J."/>
            <person name="Sidhu V.K."/>
            <person name="Sieber V."/>
            <person name="Tauch A."/>
            <person name="Watt S.A."/>
            <person name="Weisshaar B."/>
            <person name="Becker A."/>
            <person name="Niehaus K."/>
            <person name="Puehler A."/>
        </authorList>
    </citation>
    <scope>NUCLEOTIDE SEQUENCE [LARGE SCALE GENOMIC DNA]</scope>
    <source>
        <strain>B100</strain>
    </source>
</reference>
<gene>
    <name evidence="1" type="primary">queA</name>
    <name type="ordered locus">xcc-b100_1793</name>
</gene>
<comment type="function">
    <text evidence="1">Transfers and isomerizes the ribose moiety from AdoMet to the 7-aminomethyl group of 7-deazaguanine (preQ1-tRNA) to give epoxyqueuosine (oQ-tRNA).</text>
</comment>
<comment type="catalytic activity">
    <reaction evidence="1">
        <text>7-aminomethyl-7-carbaguanosine(34) in tRNA + S-adenosyl-L-methionine = epoxyqueuosine(34) in tRNA + adenine + L-methionine + 2 H(+)</text>
        <dbReference type="Rhea" id="RHEA:32155"/>
        <dbReference type="Rhea" id="RHEA-COMP:10342"/>
        <dbReference type="Rhea" id="RHEA-COMP:18582"/>
        <dbReference type="ChEBI" id="CHEBI:15378"/>
        <dbReference type="ChEBI" id="CHEBI:16708"/>
        <dbReference type="ChEBI" id="CHEBI:57844"/>
        <dbReference type="ChEBI" id="CHEBI:59789"/>
        <dbReference type="ChEBI" id="CHEBI:82833"/>
        <dbReference type="ChEBI" id="CHEBI:194443"/>
        <dbReference type="EC" id="2.4.99.17"/>
    </reaction>
</comment>
<comment type="pathway">
    <text evidence="1">tRNA modification; tRNA-queuosine biosynthesis.</text>
</comment>
<comment type="subunit">
    <text evidence="1">Monomer.</text>
</comment>
<comment type="subcellular location">
    <subcellularLocation>
        <location evidence="1">Cytoplasm</location>
    </subcellularLocation>
</comment>
<comment type="similarity">
    <text evidence="1">Belongs to the QueA family.</text>
</comment>
<feature type="chain" id="PRO_1000094829" description="S-adenosylmethionine:tRNA ribosyltransferase-isomerase">
    <location>
        <begin position="1"/>
        <end position="356"/>
    </location>
</feature>
<keyword id="KW-0963">Cytoplasm</keyword>
<keyword id="KW-0671">Queuosine biosynthesis</keyword>
<keyword id="KW-0949">S-adenosyl-L-methionine</keyword>
<keyword id="KW-0808">Transferase</keyword>
<evidence type="ECO:0000255" key="1">
    <source>
        <dbReference type="HAMAP-Rule" id="MF_00113"/>
    </source>
</evidence>
<proteinExistence type="inferred from homology"/>
<name>QUEA_XANCB</name>
<organism>
    <name type="scientific">Xanthomonas campestris pv. campestris (strain B100)</name>
    <dbReference type="NCBI Taxonomy" id="509169"/>
    <lineage>
        <taxon>Bacteria</taxon>
        <taxon>Pseudomonadati</taxon>
        <taxon>Pseudomonadota</taxon>
        <taxon>Gammaproteobacteria</taxon>
        <taxon>Lysobacterales</taxon>
        <taxon>Lysobacteraceae</taxon>
        <taxon>Xanthomonas</taxon>
    </lineage>
</organism>
<dbReference type="EC" id="2.4.99.17" evidence="1"/>
<dbReference type="EMBL" id="AM920689">
    <property type="protein sequence ID" value="CAP51145.1"/>
    <property type="molecule type" value="Genomic_DNA"/>
</dbReference>
<dbReference type="SMR" id="B0RRR0"/>
<dbReference type="KEGG" id="xca:xcc-b100_1793"/>
<dbReference type="HOGENOM" id="CLU_039110_1_0_6"/>
<dbReference type="UniPathway" id="UPA00392"/>
<dbReference type="Proteomes" id="UP000001188">
    <property type="component" value="Chromosome"/>
</dbReference>
<dbReference type="GO" id="GO:0005737">
    <property type="term" value="C:cytoplasm"/>
    <property type="evidence" value="ECO:0007669"/>
    <property type="project" value="UniProtKB-SubCell"/>
</dbReference>
<dbReference type="GO" id="GO:0051075">
    <property type="term" value="F:S-adenosylmethionine:tRNA ribosyltransferase-isomerase activity"/>
    <property type="evidence" value="ECO:0007669"/>
    <property type="project" value="UniProtKB-EC"/>
</dbReference>
<dbReference type="GO" id="GO:0008616">
    <property type="term" value="P:queuosine biosynthetic process"/>
    <property type="evidence" value="ECO:0007669"/>
    <property type="project" value="UniProtKB-UniRule"/>
</dbReference>
<dbReference type="GO" id="GO:0002099">
    <property type="term" value="P:tRNA wobble guanine modification"/>
    <property type="evidence" value="ECO:0007669"/>
    <property type="project" value="TreeGrafter"/>
</dbReference>
<dbReference type="FunFam" id="2.40.10.240:FF:000003">
    <property type="entry name" value="S-adenosylmethionine:tRNA ribosyltransferase-isomerase"/>
    <property type="match status" value="1"/>
</dbReference>
<dbReference type="FunFam" id="3.40.1780.10:FF:000001">
    <property type="entry name" value="S-adenosylmethionine:tRNA ribosyltransferase-isomerase"/>
    <property type="match status" value="1"/>
</dbReference>
<dbReference type="Gene3D" id="2.40.10.240">
    <property type="entry name" value="QueA-like"/>
    <property type="match status" value="1"/>
</dbReference>
<dbReference type="Gene3D" id="3.40.1780.10">
    <property type="entry name" value="QueA-like"/>
    <property type="match status" value="1"/>
</dbReference>
<dbReference type="HAMAP" id="MF_00113">
    <property type="entry name" value="QueA"/>
    <property type="match status" value="1"/>
</dbReference>
<dbReference type="InterPro" id="IPR003699">
    <property type="entry name" value="QueA"/>
</dbReference>
<dbReference type="InterPro" id="IPR042118">
    <property type="entry name" value="QueA_dom1"/>
</dbReference>
<dbReference type="InterPro" id="IPR042119">
    <property type="entry name" value="QueA_dom2"/>
</dbReference>
<dbReference type="InterPro" id="IPR036100">
    <property type="entry name" value="QueA_sf"/>
</dbReference>
<dbReference type="NCBIfam" id="NF001140">
    <property type="entry name" value="PRK00147.1"/>
    <property type="match status" value="1"/>
</dbReference>
<dbReference type="NCBIfam" id="TIGR00113">
    <property type="entry name" value="queA"/>
    <property type="match status" value="1"/>
</dbReference>
<dbReference type="PANTHER" id="PTHR30307">
    <property type="entry name" value="S-ADENOSYLMETHIONINE:TRNA RIBOSYLTRANSFERASE-ISOMERASE"/>
    <property type="match status" value="1"/>
</dbReference>
<dbReference type="PANTHER" id="PTHR30307:SF0">
    <property type="entry name" value="S-ADENOSYLMETHIONINE:TRNA RIBOSYLTRANSFERASE-ISOMERASE"/>
    <property type="match status" value="1"/>
</dbReference>
<dbReference type="Pfam" id="PF02547">
    <property type="entry name" value="Queuosine_synth"/>
    <property type="match status" value="1"/>
</dbReference>
<dbReference type="SUPFAM" id="SSF111337">
    <property type="entry name" value="QueA-like"/>
    <property type="match status" value="1"/>
</dbReference>
<sequence>MKKSDFHYDLPEELIAQAPLAERAASRLLVVPPTPAAFSDRQVRDLPELLQPGDLLIFNDTRVIPARLFGQKASGGRVEILIERLLGGQQARAQIGASKSPKAGSVIALDAGGQAEVLGRDGEFYLLRFDIPAPLEHWLLDAGRLPLPPYIRREPGLDDRERYQTVFAREVGAVAAPTAGLHFDEALLARLRERGVEFGHVTLHVGAGTFQPVRVDALDKHVMHTEWLNVGAALVEQVRRTRARGGRVIAVGTTVVRSLESAWRKTDDAPHGELQPFAGETQIFILPGYRIRSVDAMVTNFHLPESTLLMMVSAFAGCDRIFAAYAHAIAQRYRFFSYGDAMLLWSREWGIGNGES</sequence>